<reference key="1">
    <citation type="journal article" date="2009" name="Mol. Biol. Evol.">
        <title>Molecular evolution, functional variation, and proposed nomenclature of the gene family that includes sphingomyelinase D in sicariid spider venoms.</title>
        <authorList>
            <person name="Binford G.J."/>
            <person name="Bodner M.R."/>
            <person name="Cordes M.H."/>
            <person name="Baldwin K.L."/>
            <person name="Rynerson M.R."/>
            <person name="Burns S.N."/>
            <person name="Zobel-Thropp P.A."/>
        </authorList>
    </citation>
    <scope>NUCLEOTIDE SEQUENCE [MRNA]</scope>
    <scope>NOMENCLATURE</scope>
    <source>
        <tissue>Venom gland</tissue>
    </source>
</reference>
<name>A1L_LOXDE</name>
<keyword id="KW-0204">Cytolysis</keyword>
<keyword id="KW-1061">Dermonecrotic toxin</keyword>
<keyword id="KW-1015">Disulfide bond</keyword>
<keyword id="KW-0325">Glycoprotein</keyword>
<keyword id="KW-0354">Hemolysis</keyword>
<keyword id="KW-0442">Lipid degradation</keyword>
<keyword id="KW-0443">Lipid metabolism</keyword>
<keyword id="KW-0456">Lyase</keyword>
<keyword id="KW-0460">Magnesium</keyword>
<keyword id="KW-0479">Metal-binding</keyword>
<keyword id="KW-0964">Secreted</keyword>
<keyword id="KW-0800">Toxin</keyword>
<organism>
    <name type="scientific">Loxosceles deserta</name>
    <name type="common">Desert recluse spider</name>
    <dbReference type="NCBI Taxonomy" id="424440"/>
    <lineage>
        <taxon>Eukaryota</taxon>
        <taxon>Metazoa</taxon>
        <taxon>Ecdysozoa</taxon>
        <taxon>Arthropoda</taxon>
        <taxon>Chelicerata</taxon>
        <taxon>Arachnida</taxon>
        <taxon>Araneae</taxon>
        <taxon>Araneomorphae</taxon>
        <taxon>Haplogynae</taxon>
        <taxon>Scytodoidea</taxon>
        <taxon>Sicariidae</taxon>
        <taxon>Loxosceles</taxon>
    </lineage>
</organism>
<protein>
    <recommendedName>
        <fullName evidence="7">Dermonecrotic toxin LdSicTox-alphaIB2</fullName>
        <ecNumber evidence="4">4.6.1.-</ecNumber>
    </recommendedName>
    <alternativeName>
        <fullName>Phospholipase D</fullName>
        <shortName>PLD</shortName>
    </alternativeName>
    <alternativeName>
        <fullName>Sphingomyelin phosphodiesterase D</fullName>
        <shortName>SMD</shortName>
        <shortName>SMase D</shortName>
        <shortName>Sphingomyelinase D</shortName>
    </alternativeName>
</protein>
<evidence type="ECO:0000250" key="1">
    <source>
        <dbReference type="UniProtKB" id="A0A0D4WTV1"/>
    </source>
</evidence>
<evidence type="ECO:0000250" key="2">
    <source>
        <dbReference type="UniProtKB" id="A0A0D4WV12"/>
    </source>
</evidence>
<evidence type="ECO:0000250" key="3">
    <source>
        <dbReference type="UniProtKB" id="P0CE80"/>
    </source>
</evidence>
<evidence type="ECO:0000250" key="4">
    <source>
        <dbReference type="UniProtKB" id="Q4ZFU2"/>
    </source>
</evidence>
<evidence type="ECO:0000250" key="5">
    <source>
        <dbReference type="UniProtKB" id="Q8I914"/>
    </source>
</evidence>
<evidence type="ECO:0000255" key="6"/>
<evidence type="ECO:0000303" key="7">
    <source>
    </source>
</evidence>
<evidence type="ECO:0000305" key="8"/>
<evidence type="ECO:0000305" key="9">
    <source>
    </source>
</evidence>
<proteinExistence type="evidence at transcript level"/>
<feature type="chain" id="PRO_0000392798" description="Dermonecrotic toxin LdSicTox-alphaIB2">
    <location>
        <begin position="1" status="less than"/>
        <end position="276"/>
    </location>
</feature>
<feature type="active site" evidence="5">
    <location>
        <position position="5"/>
    </location>
</feature>
<feature type="active site" description="Nucleophile" evidence="5">
    <location>
        <position position="41"/>
    </location>
</feature>
<feature type="binding site" evidence="5">
    <location>
        <position position="25"/>
    </location>
    <ligand>
        <name>Mg(2+)</name>
        <dbReference type="ChEBI" id="CHEBI:18420"/>
    </ligand>
</feature>
<feature type="binding site" evidence="5">
    <location>
        <position position="27"/>
    </location>
    <ligand>
        <name>Mg(2+)</name>
        <dbReference type="ChEBI" id="CHEBI:18420"/>
    </ligand>
</feature>
<feature type="binding site" evidence="5">
    <location>
        <position position="85"/>
    </location>
    <ligand>
        <name>Mg(2+)</name>
        <dbReference type="ChEBI" id="CHEBI:18420"/>
    </ligand>
</feature>
<feature type="glycosylation site" description="N-linked (GlcNAc...) asparagine" evidence="6">
    <location>
        <position position="253"/>
    </location>
</feature>
<feature type="disulfide bond" evidence="3">
    <location>
        <begin position="45"/>
        <end position="51"/>
    </location>
</feature>
<feature type="disulfide bond" evidence="3">
    <location>
        <begin position="47"/>
        <end position="190"/>
    </location>
</feature>
<feature type="non-terminal residue">
    <location>
        <position position="1"/>
    </location>
</feature>
<sequence>LIMGHMVNAIYQIDEFVNLGANSIEIDVSFDDSANPEYTYHGIPCDCRRWCTKWEYFNGFLKALRKATTPGDSKYHEKLVLVVFDLKTNSLYNYQAYDAGKKLAENLLQHYWNNGNNGGRAYIVLSIPNLAHYKLITGFKETLKNKGHPELMEKVGHDFSGNDNLDQVAKAYKKAGVTGHVWQSDGITNCIASFIRGIDRAKKAVANRDSSNGFINKVYYWTVDKYSTTREALDAGVDGIMTNYPDVIANVLNESAYKTKFRLATYADNPWETFKN</sequence>
<dbReference type="EC" id="4.6.1.-" evidence="4"/>
<dbReference type="EMBL" id="FJ171380">
    <property type="protein sequence ID" value="ACN48876.1"/>
    <property type="molecule type" value="mRNA"/>
</dbReference>
<dbReference type="SMR" id="C0JAU5"/>
<dbReference type="GO" id="GO:0005576">
    <property type="term" value="C:extracellular region"/>
    <property type="evidence" value="ECO:0007669"/>
    <property type="project" value="UniProtKB-SubCell"/>
</dbReference>
<dbReference type="GO" id="GO:0016829">
    <property type="term" value="F:lyase activity"/>
    <property type="evidence" value="ECO:0007669"/>
    <property type="project" value="UniProtKB-KW"/>
</dbReference>
<dbReference type="GO" id="GO:0046872">
    <property type="term" value="F:metal ion binding"/>
    <property type="evidence" value="ECO:0007669"/>
    <property type="project" value="UniProtKB-KW"/>
</dbReference>
<dbReference type="GO" id="GO:0008081">
    <property type="term" value="F:phosphoric diester hydrolase activity"/>
    <property type="evidence" value="ECO:0007669"/>
    <property type="project" value="InterPro"/>
</dbReference>
<dbReference type="GO" id="GO:0090729">
    <property type="term" value="F:toxin activity"/>
    <property type="evidence" value="ECO:0007669"/>
    <property type="project" value="UniProtKB-KW"/>
</dbReference>
<dbReference type="GO" id="GO:0031640">
    <property type="term" value="P:killing of cells of another organism"/>
    <property type="evidence" value="ECO:0007669"/>
    <property type="project" value="UniProtKB-KW"/>
</dbReference>
<dbReference type="GO" id="GO:0016042">
    <property type="term" value="P:lipid catabolic process"/>
    <property type="evidence" value="ECO:0007669"/>
    <property type="project" value="UniProtKB-KW"/>
</dbReference>
<dbReference type="CDD" id="cd08576">
    <property type="entry name" value="GDPD_like_SMaseD_PLD"/>
    <property type="match status" value="1"/>
</dbReference>
<dbReference type="Gene3D" id="3.20.20.190">
    <property type="entry name" value="Phosphatidylinositol (PI) phosphodiesterase"/>
    <property type="match status" value="1"/>
</dbReference>
<dbReference type="InterPro" id="IPR017946">
    <property type="entry name" value="PLC-like_Pdiesterase_TIM-brl"/>
</dbReference>
<dbReference type="Pfam" id="PF13653">
    <property type="entry name" value="GDPD_2"/>
    <property type="match status" value="1"/>
</dbReference>
<dbReference type="SUPFAM" id="SSF51695">
    <property type="entry name" value="PLC-like phosphodiesterases"/>
    <property type="match status" value="1"/>
</dbReference>
<accession>C0JAU5</accession>
<comment type="function">
    <text evidence="1 3">Dermonecrotic toxins cleave the phosphodiester linkage between the phosphate and headgroup of certain phospholipids (sphingolipid and lysolipid substrates), forming an alcohol (often choline) and a cyclic phosphate (By similarity). This toxin acts on sphingomyelin (SM) (By similarity). It may also act on ceramide phosphoethanolamine (CPE), lysophosphatidylcholine (LPC) and lysophosphatidylethanolamine (LPE), but not on lysophosphatidylserine (LPS), and lysophosphatidylglycerol (LPG) (By similarity). It acts by transphosphatidylation, releasing exclusively cyclic phosphate products as second products (By similarity). Induces dermonecrosis, hemolysis, increased vascular permeability, edema, inflammatory response, and platelet aggregation (By similarity).</text>
</comment>
<comment type="catalytic activity">
    <reaction evidence="1">
        <text>an N-(acyl)-sphingosylphosphocholine = an N-(acyl)-sphingosyl-1,3-cyclic phosphate + choline</text>
        <dbReference type="Rhea" id="RHEA:60652"/>
        <dbReference type="ChEBI" id="CHEBI:15354"/>
        <dbReference type="ChEBI" id="CHEBI:64583"/>
        <dbReference type="ChEBI" id="CHEBI:143892"/>
    </reaction>
</comment>
<comment type="catalytic activity">
    <reaction evidence="1">
        <text>an N-(acyl)-sphingosylphosphoethanolamine = an N-(acyl)-sphingosyl-1,3-cyclic phosphate + ethanolamine</text>
        <dbReference type="Rhea" id="RHEA:60648"/>
        <dbReference type="ChEBI" id="CHEBI:57603"/>
        <dbReference type="ChEBI" id="CHEBI:143891"/>
        <dbReference type="ChEBI" id="CHEBI:143892"/>
    </reaction>
</comment>
<comment type="catalytic activity">
    <reaction evidence="1">
        <text>a 1-acyl-sn-glycero-3-phosphocholine = a 1-acyl-sn-glycero-2,3-cyclic phosphate + choline</text>
        <dbReference type="Rhea" id="RHEA:60700"/>
        <dbReference type="ChEBI" id="CHEBI:15354"/>
        <dbReference type="ChEBI" id="CHEBI:58168"/>
        <dbReference type="ChEBI" id="CHEBI:143947"/>
    </reaction>
</comment>
<comment type="catalytic activity">
    <reaction evidence="1">
        <text>a 1-acyl-sn-glycero-3-phosphoethanolamine = a 1-acyl-sn-glycero-2,3-cyclic phosphate + ethanolamine</text>
        <dbReference type="Rhea" id="RHEA:60704"/>
        <dbReference type="ChEBI" id="CHEBI:57603"/>
        <dbReference type="ChEBI" id="CHEBI:64381"/>
        <dbReference type="ChEBI" id="CHEBI:143947"/>
    </reaction>
</comment>
<comment type="cofactor">
    <cofactor evidence="5">
        <name>Mg(2+)</name>
        <dbReference type="ChEBI" id="CHEBI:18420"/>
    </cofactor>
    <text evidence="5">Binds 1 Mg(2+) ion per subunit.</text>
</comment>
<comment type="subcellular location">
    <subcellularLocation>
        <location evidence="9">Secreted</location>
    </subcellularLocation>
</comment>
<comment type="tissue specificity">
    <text evidence="9">Expressed by the venom gland.</text>
</comment>
<comment type="similarity">
    <text evidence="8">Belongs to the arthropod phospholipase D family. Class II subfamily.</text>
</comment>
<comment type="caution">
    <text evidence="1 2 4">The most common activity assay for dermonecrotic toxins detects enzymatic activity by monitoring choline release from substrate. Liberation of choline from sphingomyelin (SM) or lysophosphatidylcholine (LPC) is commonly assumed to result from substrate hydrolysis, giving either ceramide-1-phosphate (C1P) or lysophosphatidic acid (LPA), respectively, as a second product. However, two studies from Lajoie and colleagues (2013 and 2015) report the observation of exclusive formation of cyclic phosphate products as second products, resulting from intramolecular transphosphatidylation. Cyclic phosphates have vastly different biological properties from their monoester counterparts, and they may be relevant to the pathology of brown spider envenomation.</text>
</comment>